<dbReference type="EC" id="2.7.11.24" evidence="2"/>
<dbReference type="EMBL" id="AM236311">
    <property type="protein sequence ID" value="CAJ85638.1"/>
    <property type="molecule type" value="Genomic_DNA"/>
</dbReference>
<dbReference type="EMBL" id="CP009819">
    <property type="protein sequence ID" value="ATZ57828.1"/>
    <property type="molecule type" value="Genomic_DNA"/>
</dbReference>
<dbReference type="RefSeq" id="XP_001558337.1">
    <property type="nucleotide sequence ID" value="XM_001558287.1"/>
</dbReference>
<dbReference type="SMR" id="A1IVT7"/>
<dbReference type="EnsemblFungi" id="Bcin15g03580.2">
    <property type="protein sequence ID" value="Bcin15p03580.2"/>
    <property type="gene ID" value="Bcin15g03580"/>
</dbReference>
<dbReference type="VEuPathDB" id="FungiDB:Bcin15g03580"/>
<dbReference type="OMA" id="NRYTDLN"/>
<dbReference type="OrthoDB" id="192887at2759"/>
<dbReference type="PHI-base" id="PHI:1031"/>
<dbReference type="Proteomes" id="UP000001798">
    <property type="component" value="Chromosome bcin15"/>
</dbReference>
<dbReference type="GO" id="GO:0005737">
    <property type="term" value="C:cytoplasm"/>
    <property type="evidence" value="ECO:0007669"/>
    <property type="project" value="UniProtKB-SubCell"/>
</dbReference>
<dbReference type="GO" id="GO:0005634">
    <property type="term" value="C:nucleus"/>
    <property type="evidence" value="ECO:0000314"/>
    <property type="project" value="CACAO"/>
</dbReference>
<dbReference type="GO" id="GO:0005524">
    <property type="term" value="F:ATP binding"/>
    <property type="evidence" value="ECO:0007669"/>
    <property type="project" value="UniProtKB-KW"/>
</dbReference>
<dbReference type="GO" id="GO:0004707">
    <property type="term" value="F:MAP kinase activity"/>
    <property type="evidence" value="ECO:0007669"/>
    <property type="project" value="UniProtKB-EC"/>
</dbReference>
<dbReference type="GO" id="GO:0106310">
    <property type="term" value="F:protein serine kinase activity"/>
    <property type="evidence" value="ECO:0007669"/>
    <property type="project" value="RHEA"/>
</dbReference>
<dbReference type="GO" id="GO:0051403">
    <property type="term" value="P:stress-activated MAPK cascade"/>
    <property type="evidence" value="ECO:0007669"/>
    <property type="project" value="InterPro"/>
</dbReference>
<dbReference type="CDD" id="cd07856">
    <property type="entry name" value="STKc_Sty1_Hog1"/>
    <property type="match status" value="1"/>
</dbReference>
<dbReference type="FunFam" id="1.10.510.10:FF:000049">
    <property type="entry name" value="Mitogen-activated protein kinase"/>
    <property type="match status" value="1"/>
</dbReference>
<dbReference type="FunFam" id="3.30.200.20:FF:000050">
    <property type="entry name" value="Mitogen-activated protein kinase"/>
    <property type="match status" value="1"/>
</dbReference>
<dbReference type="Gene3D" id="3.30.200.20">
    <property type="entry name" value="Phosphorylase Kinase, domain 1"/>
    <property type="match status" value="1"/>
</dbReference>
<dbReference type="Gene3D" id="1.10.510.10">
    <property type="entry name" value="Transferase(Phosphotransferase) domain 1"/>
    <property type="match status" value="1"/>
</dbReference>
<dbReference type="InterPro" id="IPR011009">
    <property type="entry name" value="Kinase-like_dom_sf"/>
</dbReference>
<dbReference type="InterPro" id="IPR050117">
    <property type="entry name" value="MAP_kinase"/>
</dbReference>
<dbReference type="InterPro" id="IPR003527">
    <property type="entry name" value="MAP_kinase_CS"/>
</dbReference>
<dbReference type="InterPro" id="IPR008352">
    <property type="entry name" value="MAPK_p38-like"/>
</dbReference>
<dbReference type="InterPro" id="IPR038783">
    <property type="entry name" value="MAPK_Sty1/Hog1"/>
</dbReference>
<dbReference type="InterPro" id="IPR000719">
    <property type="entry name" value="Prot_kinase_dom"/>
</dbReference>
<dbReference type="InterPro" id="IPR017441">
    <property type="entry name" value="Protein_kinase_ATP_BS"/>
</dbReference>
<dbReference type="InterPro" id="IPR008271">
    <property type="entry name" value="Ser/Thr_kinase_AS"/>
</dbReference>
<dbReference type="PANTHER" id="PTHR24055">
    <property type="entry name" value="MITOGEN-ACTIVATED PROTEIN KINASE"/>
    <property type="match status" value="1"/>
</dbReference>
<dbReference type="Pfam" id="PF00069">
    <property type="entry name" value="Pkinase"/>
    <property type="match status" value="1"/>
</dbReference>
<dbReference type="PRINTS" id="PR01773">
    <property type="entry name" value="P38MAPKINASE"/>
</dbReference>
<dbReference type="SMART" id="SM00220">
    <property type="entry name" value="S_TKc"/>
    <property type="match status" value="1"/>
</dbReference>
<dbReference type="SUPFAM" id="SSF56112">
    <property type="entry name" value="Protein kinase-like (PK-like)"/>
    <property type="match status" value="1"/>
</dbReference>
<dbReference type="PROSITE" id="PS01351">
    <property type="entry name" value="MAPK"/>
    <property type="match status" value="1"/>
</dbReference>
<dbReference type="PROSITE" id="PS00107">
    <property type="entry name" value="PROTEIN_KINASE_ATP"/>
    <property type="match status" value="1"/>
</dbReference>
<dbReference type="PROSITE" id="PS50011">
    <property type="entry name" value="PROTEIN_KINASE_DOM"/>
    <property type="match status" value="1"/>
</dbReference>
<dbReference type="PROSITE" id="PS00108">
    <property type="entry name" value="PROTEIN_KINASE_ST"/>
    <property type="match status" value="1"/>
</dbReference>
<name>HOG1_BOTFB</name>
<evidence type="ECO:0000250" key="1"/>
<evidence type="ECO:0000250" key="2">
    <source>
        <dbReference type="UniProtKB" id="P32485"/>
    </source>
</evidence>
<evidence type="ECO:0000250" key="3">
    <source>
        <dbReference type="UniProtKB" id="Q16539"/>
    </source>
</evidence>
<evidence type="ECO:0000250" key="4">
    <source>
        <dbReference type="UniProtKB" id="Q4WSF6"/>
    </source>
</evidence>
<evidence type="ECO:0000255" key="5">
    <source>
        <dbReference type="PROSITE-ProRule" id="PRU00159"/>
    </source>
</evidence>
<evidence type="ECO:0000255" key="6">
    <source>
        <dbReference type="PROSITE-ProRule" id="PRU10027"/>
    </source>
</evidence>
<evidence type="ECO:0000269" key="7">
    <source>
    </source>
</evidence>
<reference key="1">
    <citation type="journal article" date="2007" name="Eukaryot. Cell">
        <title>BcSAK1, a stress-activated mitogen-activated protein kinase, is involved in vegetative differentiation and pathogenicity in Botrytis cinerea.</title>
        <authorList>
            <person name="Segmueller N."/>
            <person name="Ellendorf U."/>
            <person name="Tudzynski B."/>
            <person name="Tudzynski P."/>
        </authorList>
    </citation>
    <scope>NUCLEOTIDE SEQUENCE [GENOMIC DNA]</scope>
    <scope>FUNCTION</scope>
    <scope>PHOSPHORYLATION</scope>
</reference>
<reference key="2">
    <citation type="journal article" date="2011" name="PLoS Genet.">
        <title>Genomic analysis of the necrotrophic fungal pathogens Sclerotinia sclerotiorum and Botrytis cinerea.</title>
        <authorList>
            <person name="Amselem J."/>
            <person name="Cuomo C.A."/>
            <person name="van Kan J.A.L."/>
            <person name="Viaud M."/>
            <person name="Benito E.P."/>
            <person name="Couloux A."/>
            <person name="Coutinho P.M."/>
            <person name="de Vries R.P."/>
            <person name="Dyer P.S."/>
            <person name="Fillinger S."/>
            <person name="Fournier E."/>
            <person name="Gout L."/>
            <person name="Hahn M."/>
            <person name="Kohn L."/>
            <person name="Lapalu N."/>
            <person name="Plummer K.M."/>
            <person name="Pradier J.-M."/>
            <person name="Quevillon E."/>
            <person name="Sharon A."/>
            <person name="Simon A."/>
            <person name="ten Have A."/>
            <person name="Tudzynski B."/>
            <person name="Tudzynski P."/>
            <person name="Wincker P."/>
            <person name="Andrew M."/>
            <person name="Anthouard V."/>
            <person name="Beever R.E."/>
            <person name="Beffa R."/>
            <person name="Benoit I."/>
            <person name="Bouzid O."/>
            <person name="Brault B."/>
            <person name="Chen Z."/>
            <person name="Choquer M."/>
            <person name="Collemare J."/>
            <person name="Cotton P."/>
            <person name="Danchin E.G."/>
            <person name="Da Silva C."/>
            <person name="Gautier A."/>
            <person name="Giraud C."/>
            <person name="Giraud T."/>
            <person name="Gonzalez C."/>
            <person name="Grossetete S."/>
            <person name="Gueldener U."/>
            <person name="Henrissat B."/>
            <person name="Howlett B.J."/>
            <person name="Kodira C."/>
            <person name="Kretschmer M."/>
            <person name="Lappartient A."/>
            <person name="Leroch M."/>
            <person name="Levis C."/>
            <person name="Mauceli E."/>
            <person name="Neuveglise C."/>
            <person name="Oeser B."/>
            <person name="Pearson M."/>
            <person name="Poulain J."/>
            <person name="Poussereau N."/>
            <person name="Quesneville H."/>
            <person name="Rascle C."/>
            <person name="Schumacher J."/>
            <person name="Segurens B."/>
            <person name="Sexton A."/>
            <person name="Silva E."/>
            <person name="Sirven C."/>
            <person name="Soanes D.M."/>
            <person name="Talbot N.J."/>
            <person name="Templeton M."/>
            <person name="Yandava C."/>
            <person name="Yarden O."/>
            <person name="Zeng Q."/>
            <person name="Rollins J.A."/>
            <person name="Lebrun M.-H."/>
            <person name="Dickman M."/>
        </authorList>
    </citation>
    <scope>NUCLEOTIDE SEQUENCE [LARGE SCALE GENOMIC DNA]</scope>
    <source>
        <strain>B05.10</strain>
    </source>
</reference>
<reference key="3">
    <citation type="journal article" date="2012" name="Eukaryot. Cell">
        <title>Genome update of Botrytis cinerea strains B05.10 and T4.</title>
        <authorList>
            <person name="Staats M."/>
            <person name="van Kan J.A.L."/>
        </authorList>
    </citation>
    <scope>NUCLEOTIDE SEQUENCE [LARGE SCALE GENOMIC DNA]</scope>
    <scope>GENOME REANNOTATION</scope>
    <source>
        <strain>B05.10</strain>
    </source>
</reference>
<reference key="4">
    <citation type="journal article" date="2017" name="Mol. Plant Pathol.">
        <title>A gapless genome sequence of the fungus Botrytis cinerea.</title>
        <authorList>
            <person name="van Kan J.A.L."/>
            <person name="Stassen J.H.M."/>
            <person name="Mosbach A."/>
            <person name="van der Lee T.A.J."/>
            <person name="Faino L."/>
            <person name="Farmer A.D."/>
            <person name="Papasotiriou D.G."/>
            <person name="Zhou S."/>
            <person name="Seidl M.F."/>
            <person name="Cottam E."/>
            <person name="Edel D."/>
            <person name="Hahn M."/>
            <person name="Schwartz D.C."/>
            <person name="Dietrich R.A."/>
            <person name="Widdison S."/>
            <person name="Scalliet G."/>
        </authorList>
    </citation>
    <scope>NUCLEOTIDE SEQUENCE [LARGE SCALE GENOMIC DNA]</scope>
    <scope>GENOME REANNOTATION</scope>
    <source>
        <strain>B05.10</strain>
    </source>
</reference>
<organism>
    <name type="scientific">Botryotinia fuckeliana (strain B05.10)</name>
    <name type="common">Noble rot fungus</name>
    <name type="synonym">Botrytis cinerea</name>
    <dbReference type="NCBI Taxonomy" id="332648"/>
    <lineage>
        <taxon>Eukaryota</taxon>
        <taxon>Fungi</taxon>
        <taxon>Dikarya</taxon>
        <taxon>Ascomycota</taxon>
        <taxon>Pezizomycotina</taxon>
        <taxon>Leotiomycetes</taxon>
        <taxon>Helotiales</taxon>
        <taxon>Sclerotiniaceae</taxon>
        <taxon>Botrytis</taxon>
    </lineage>
</organism>
<accession>A1IVT7</accession>
<accession>A0A384K4V3</accession>
<accession>A6RRX4</accession>
<proteinExistence type="evidence at protein level"/>
<keyword id="KW-0010">Activator</keyword>
<keyword id="KW-0067">ATP-binding</keyword>
<keyword id="KW-0963">Cytoplasm</keyword>
<keyword id="KW-0418">Kinase</keyword>
<keyword id="KW-0547">Nucleotide-binding</keyword>
<keyword id="KW-0539">Nucleus</keyword>
<keyword id="KW-0597">Phosphoprotein</keyword>
<keyword id="KW-1185">Reference proteome</keyword>
<keyword id="KW-0723">Serine/threonine-protein kinase</keyword>
<keyword id="KW-0804">Transcription</keyword>
<keyword id="KW-0805">Transcription regulation</keyword>
<keyword id="KW-0808">Transferase</keyword>
<comment type="function">
    <text evidence="4 7">Proline-directed serine/threonine-protein kinase involved in a signal transduction pathway that is activated by changes in the osmolarity of the extracellular environment. Controls osmotic regulation of transcription of target genes (By similarity). Involved in vegetative and pathogenic development like conidia formation, sclerotial development, and in penetration into unwounded plant tissue.</text>
</comment>
<comment type="catalytic activity">
    <reaction evidence="2">
        <text>L-seryl-[protein] + ATP = O-phospho-L-seryl-[protein] + ADP + H(+)</text>
        <dbReference type="Rhea" id="RHEA:17989"/>
        <dbReference type="Rhea" id="RHEA-COMP:9863"/>
        <dbReference type="Rhea" id="RHEA-COMP:11604"/>
        <dbReference type="ChEBI" id="CHEBI:15378"/>
        <dbReference type="ChEBI" id="CHEBI:29999"/>
        <dbReference type="ChEBI" id="CHEBI:30616"/>
        <dbReference type="ChEBI" id="CHEBI:83421"/>
        <dbReference type="ChEBI" id="CHEBI:456216"/>
        <dbReference type="EC" id="2.7.11.24"/>
    </reaction>
    <physiologicalReaction direction="left-to-right" evidence="2">
        <dbReference type="Rhea" id="RHEA:17990"/>
    </physiologicalReaction>
</comment>
<comment type="catalytic activity">
    <reaction evidence="2">
        <text>L-threonyl-[protein] + ATP = O-phospho-L-threonyl-[protein] + ADP + H(+)</text>
        <dbReference type="Rhea" id="RHEA:46608"/>
        <dbReference type="Rhea" id="RHEA-COMP:11060"/>
        <dbReference type="Rhea" id="RHEA-COMP:11605"/>
        <dbReference type="ChEBI" id="CHEBI:15378"/>
        <dbReference type="ChEBI" id="CHEBI:30013"/>
        <dbReference type="ChEBI" id="CHEBI:30616"/>
        <dbReference type="ChEBI" id="CHEBI:61977"/>
        <dbReference type="ChEBI" id="CHEBI:456216"/>
        <dbReference type="EC" id="2.7.11.24"/>
    </reaction>
    <physiologicalReaction direction="left-to-right" evidence="2">
        <dbReference type="Rhea" id="RHEA:46609"/>
    </physiologicalReaction>
</comment>
<comment type="cofactor">
    <cofactor evidence="3">
        <name>Mg(2+)</name>
        <dbReference type="ChEBI" id="CHEBI:18420"/>
    </cofactor>
</comment>
<comment type="activity regulation">
    <text evidence="1">Activated by tyrosine and threonine phosphorylation.</text>
</comment>
<comment type="subcellular location">
    <subcellularLocation>
        <location evidence="1">Cytoplasm</location>
    </subcellularLocation>
    <subcellularLocation>
        <location evidence="1">Nucleus</location>
    </subcellularLocation>
</comment>
<comment type="domain">
    <text>The TXY motif contains the threonine and tyrosine residues whose phosphorylation activates the MAP kinases.</text>
</comment>
<comment type="PTM">
    <text evidence="1 7">Dually phosphorylated on Thr-171 and Tyr-173, which activates the enzyme (By similarity). Phosphorylated under osmotic stress, specific fungicides, and oxidative stress mediated by H(2)O(2) and menadione.</text>
</comment>
<comment type="similarity">
    <text evidence="5">Belongs to the protein kinase superfamily. Ser/Thr protein kinase family. MAP kinase subfamily. HOG1 sub-subfamily.</text>
</comment>
<protein>
    <recommendedName>
        <fullName>Mitogen-activated protein kinase hog1</fullName>
        <shortName>MAP kinase hog1</shortName>
        <ecNumber evidence="2">2.7.11.24</ecNumber>
    </recommendedName>
    <alternativeName>
        <fullName>BcSAK1</fullName>
    </alternativeName>
    <alternativeName>
        <fullName>Stress-activated mitogen-activated protein kinase</fullName>
    </alternativeName>
</protein>
<gene>
    <name type="primary">hog1</name>
    <name type="synonym">sak1</name>
    <name type="ORF">BC1G_03001</name>
    <name type="ORF">BCIN_15g03580</name>
</gene>
<sequence>MAEFVRAQIFGTTFEITSRYSDLQPVGMGAFGLVCSAKDNLTGSNVAVKKIMKPFSTPVLSKRTYRELKLLKHLKHENVISLSDIFISPLEDIYFVTELLGTDLHRLLTSRPLEKQFIQYFLYQILRGLKYVHSAGVVHRDLKPSNILVNENCDLKICDFGLARIQDPQMTGYVSTRYYRAPEIMLTWQKYDVEVDVWSAGCIFAEMLEGKPLFPGKDHVNQFSIITELLGTPPDDVIHTIASENTLRFVQSLPKRERQPLASKFTQADPLAIDLLEKMLVFDPRARIKAAEGLAHEYLSPYHDPTDEPAAEERFDWSFNDADLPVDTWKIMMYSEILDYHNVINDAQNLTESQ</sequence>
<feature type="chain" id="PRO_0000289679" description="Mitogen-activated protein kinase hog1">
    <location>
        <begin position="1"/>
        <end position="354"/>
    </location>
</feature>
<feature type="domain" description="Protein kinase" evidence="5">
    <location>
        <begin position="20"/>
        <end position="299"/>
    </location>
</feature>
<feature type="short sequence motif" description="TXY">
    <location>
        <begin position="171"/>
        <end position="173"/>
    </location>
</feature>
<feature type="active site" description="Proton acceptor" evidence="5 6">
    <location>
        <position position="141"/>
    </location>
</feature>
<feature type="binding site" evidence="5">
    <location>
        <begin position="26"/>
        <end position="34"/>
    </location>
    <ligand>
        <name>ATP</name>
        <dbReference type="ChEBI" id="CHEBI:30616"/>
    </ligand>
</feature>
<feature type="binding site" evidence="5">
    <location>
        <position position="49"/>
    </location>
    <ligand>
        <name>ATP</name>
        <dbReference type="ChEBI" id="CHEBI:30616"/>
    </ligand>
</feature>
<feature type="modified residue" description="Phosphothreonine" evidence="1">
    <location>
        <position position="171"/>
    </location>
</feature>
<feature type="modified residue" description="Phosphotyrosine" evidence="1">
    <location>
        <position position="173"/>
    </location>
</feature>